<evidence type="ECO:0000255" key="1">
    <source>
        <dbReference type="HAMAP-Rule" id="MF_00365"/>
    </source>
</evidence>
<keyword id="KW-0067">ATP-binding</keyword>
<keyword id="KW-0963">Cytoplasm</keyword>
<keyword id="KW-0227">DNA damage</keyword>
<keyword id="KW-0234">DNA repair</keyword>
<keyword id="KW-0235">DNA replication</keyword>
<keyword id="KW-0238">DNA-binding</keyword>
<keyword id="KW-0547">Nucleotide-binding</keyword>
<keyword id="KW-0742">SOS response</keyword>
<organism>
    <name type="scientific">Mycobacterium sp. (strain JLS)</name>
    <dbReference type="NCBI Taxonomy" id="164757"/>
    <lineage>
        <taxon>Bacteria</taxon>
        <taxon>Bacillati</taxon>
        <taxon>Actinomycetota</taxon>
        <taxon>Actinomycetes</taxon>
        <taxon>Mycobacteriales</taxon>
        <taxon>Mycobacteriaceae</taxon>
        <taxon>Mycobacterium</taxon>
    </lineage>
</organism>
<comment type="function">
    <text evidence="1">The RecF protein is involved in DNA metabolism; it is required for DNA replication and normal SOS inducibility. RecF binds preferentially to single-stranded, linear DNA. It also seems to bind ATP.</text>
</comment>
<comment type="subcellular location">
    <subcellularLocation>
        <location evidence="1">Cytoplasm</location>
    </subcellularLocation>
</comment>
<comment type="similarity">
    <text evidence="1">Belongs to the RecF family.</text>
</comment>
<accession>A3PSE0</accession>
<reference key="1">
    <citation type="submission" date="2007-02" db="EMBL/GenBank/DDBJ databases">
        <title>Complete sequence of Mycobacterium sp. JLS.</title>
        <authorList>
            <consortium name="US DOE Joint Genome Institute"/>
            <person name="Copeland A."/>
            <person name="Lucas S."/>
            <person name="Lapidus A."/>
            <person name="Barry K."/>
            <person name="Detter J.C."/>
            <person name="Glavina del Rio T."/>
            <person name="Hammon N."/>
            <person name="Israni S."/>
            <person name="Dalin E."/>
            <person name="Tice H."/>
            <person name="Pitluck S."/>
            <person name="Chain P."/>
            <person name="Malfatti S."/>
            <person name="Shin M."/>
            <person name="Vergez L."/>
            <person name="Schmutz J."/>
            <person name="Larimer F."/>
            <person name="Land M."/>
            <person name="Hauser L."/>
            <person name="Kyrpides N."/>
            <person name="Mikhailova N."/>
            <person name="Miller C.D."/>
            <person name="Anderson A.J."/>
            <person name="Sims R.C."/>
            <person name="Richardson P."/>
        </authorList>
    </citation>
    <scope>NUCLEOTIDE SEQUENCE [LARGE SCALE GENOMIC DNA]</scope>
    <source>
        <strain>JLS</strain>
    </source>
</reference>
<dbReference type="EMBL" id="CP000580">
    <property type="protein sequence ID" value="ABN95817.1"/>
    <property type="molecule type" value="Genomic_DNA"/>
</dbReference>
<dbReference type="SMR" id="A3PSE0"/>
<dbReference type="KEGG" id="mjl:Mjls_0004"/>
<dbReference type="HOGENOM" id="CLU_040267_1_1_11"/>
<dbReference type="BioCyc" id="MSP164757:G1G8C-4-MONOMER"/>
<dbReference type="GO" id="GO:0005737">
    <property type="term" value="C:cytoplasm"/>
    <property type="evidence" value="ECO:0007669"/>
    <property type="project" value="UniProtKB-SubCell"/>
</dbReference>
<dbReference type="GO" id="GO:0005524">
    <property type="term" value="F:ATP binding"/>
    <property type="evidence" value="ECO:0007669"/>
    <property type="project" value="UniProtKB-UniRule"/>
</dbReference>
<dbReference type="GO" id="GO:0003697">
    <property type="term" value="F:single-stranded DNA binding"/>
    <property type="evidence" value="ECO:0007669"/>
    <property type="project" value="UniProtKB-UniRule"/>
</dbReference>
<dbReference type="GO" id="GO:0006260">
    <property type="term" value="P:DNA replication"/>
    <property type="evidence" value="ECO:0007669"/>
    <property type="project" value="UniProtKB-UniRule"/>
</dbReference>
<dbReference type="GO" id="GO:0000731">
    <property type="term" value="P:DNA synthesis involved in DNA repair"/>
    <property type="evidence" value="ECO:0007669"/>
    <property type="project" value="TreeGrafter"/>
</dbReference>
<dbReference type="GO" id="GO:0006302">
    <property type="term" value="P:double-strand break repair"/>
    <property type="evidence" value="ECO:0007669"/>
    <property type="project" value="TreeGrafter"/>
</dbReference>
<dbReference type="GO" id="GO:0009432">
    <property type="term" value="P:SOS response"/>
    <property type="evidence" value="ECO:0007669"/>
    <property type="project" value="UniProtKB-UniRule"/>
</dbReference>
<dbReference type="CDD" id="cd03242">
    <property type="entry name" value="ABC_RecF"/>
    <property type="match status" value="1"/>
</dbReference>
<dbReference type="Gene3D" id="3.40.50.300">
    <property type="entry name" value="P-loop containing nucleotide triphosphate hydrolases"/>
    <property type="match status" value="1"/>
</dbReference>
<dbReference type="Gene3D" id="1.20.1050.90">
    <property type="entry name" value="RecF/RecN/SMC, N-terminal domain"/>
    <property type="match status" value="1"/>
</dbReference>
<dbReference type="HAMAP" id="MF_00365">
    <property type="entry name" value="RecF"/>
    <property type="match status" value="1"/>
</dbReference>
<dbReference type="InterPro" id="IPR001238">
    <property type="entry name" value="DNA-binding_RecF"/>
</dbReference>
<dbReference type="InterPro" id="IPR018078">
    <property type="entry name" value="DNA-binding_RecF_CS"/>
</dbReference>
<dbReference type="InterPro" id="IPR027417">
    <property type="entry name" value="P-loop_NTPase"/>
</dbReference>
<dbReference type="InterPro" id="IPR003395">
    <property type="entry name" value="RecF/RecN/SMC_N"/>
</dbReference>
<dbReference type="InterPro" id="IPR042174">
    <property type="entry name" value="RecF_2"/>
</dbReference>
<dbReference type="NCBIfam" id="TIGR00611">
    <property type="entry name" value="recf"/>
    <property type="match status" value="1"/>
</dbReference>
<dbReference type="PANTHER" id="PTHR32182">
    <property type="entry name" value="DNA REPLICATION AND REPAIR PROTEIN RECF"/>
    <property type="match status" value="1"/>
</dbReference>
<dbReference type="PANTHER" id="PTHR32182:SF0">
    <property type="entry name" value="DNA REPLICATION AND REPAIR PROTEIN RECF"/>
    <property type="match status" value="1"/>
</dbReference>
<dbReference type="Pfam" id="PF02463">
    <property type="entry name" value="SMC_N"/>
    <property type="match status" value="1"/>
</dbReference>
<dbReference type="SUPFAM" id="SSF52540">
    <property type="entry name" value="P-loop containing nucleoside triphosphate hydrolases"/>
    <property type="match status" value="1"/>
</dbReference>
<dbReference type="PROSITE" id="PS00617">
    <property type="entry name" value="RECF_1"/>
    <property type="match status" value="1"/>
</dbReference>
<dbReference type="PROSITE" id="PS00618">
    <property type="entry name" value="RECF_2"/>
    <property type="match status" value="1"/>
</dbReference>
<feature type="chain" id="PRO_1000048543" description="DNA replication and repair protein RecF">
    <location>
        <begin position="1"/>
        <end position="380"/>
    </location>
</feature>
<feature type="binding site" evidence="1">
    <location>
        <begin position="30"/>
        <end position="37"/>
    </location>
    <ligand>
        <name>ATP</name>
        <dbReference type="ChEBI" id="CHEBI:30616"/>
    </ligand>
</feature>
<proteinExistence type="inferred from homology"/>
<protein>
    <recommendedName>
        <fullName evidence="1">DNA replication and repair protein RecF</fullName>
    </recommendedName>
</protein>
<gene>
    <name evidence="1" type="primary">recF</name>
    <name type="ordered locus">Mjls_0004</name>
</gene>
<sequence length="380" mass="41819">MFVRHLTLTDFRSWARADLELEPGRTVFVGPNGFGKTNLVEALWYSATLGSHRVASDAPLIRAGAPRAVVSTIVVNEGRELAVDLEITTGRANKARLNRSPVRSPREVLGVLRAVLFAPEDLALVRGDPGERRRYLDELATTRRPSIAGVRADYDRVIRQRTALLKSAAGARYRGDRSVLETLDVWDGHLAAHGALLMAARADLVHHLAPEVEKAYQLLAPGSRPAAIRYRTSIDAEDDVSAEYYEAALLDAMTRRRDAELERGVCLVGPHRDDLELRLGDQMAKGYASHGESWSMALSLRLAAYELLRTDGSDPVLLLDDVFAELDAARRRALAEVAASAEQVLVTAAVAEDIPADWDARRIVIRMQDDDDGRVSMVES</sequence>
<name>RECF_MYCSJ</name>